<accession>Q8P3C8</accession>
<reference key="1">
    <citation type="journal article" date="2002" name="Nature">
        <title>Comparison of the genomes of two Xanthomonas pathogens with differing host specificities.</title>
        <authorList>
            <person name="da Silva A.C.R."/>
            <person name="Ferro J.A."/>
            <person name="Reinach F.C."/>
            <person name="Farah C.S."/>
            <person name="Furlan L.R."/>
            <person name="Quaggio R.B."/>
            <person name="Monteiro-Vitorello C.B."/>
            <person name="Van Sluys M.A."/>
            <person name="Almeida N.F. Jr."/>
            <person name="Alves L.M.C."/>
            <person name="do Amaral A.M."/>
            <person name="Bertolini M.C."/>
            <person name="Camargo L.E.A."/>
            <person name="Camarotte G."/>
            <person name="Cannavan F."/>
            <person name="Cardozo J."/>
            <person name="Chambergo F."/>
            <person name="Ciapina L.P."/>
            <person name="Cicarelli R.M.B."/>
            <person name="Coutinho L.L."/>
            <person name="Cursino-Santos J.R."/>
            <person name="El-Dorry H."/>
            <person name="Faria J.B."/>
            <person name="Ferreira A.J.S."/>
            <person name="Ferreira R.C.C."/>
            <person name="Ferro M.I.T."/>
            <person name="Formighieri E.F."/>
            <person name="Franco M.C."/>
            <person name="Greggio C.C."/>
            <person name="Gruber A."/>
            <person name="Katsuyama A.M."/>
            <person name="Kishi L.T."/>
            <person name="Leite R.P."/>
            <person name="Lemos E.G.M."/>
            <person name="Lemos M.V.F."/>
            <person name="Locali E.C."/>
            <person name="Machado M.A."/>
            <person name="Madeira A.M.B.N."/>
            <person name="Martinez-Rossi N.M."/>
            <person name="Martins E.C."/>
            <person name="Meidanis J."/>
            <person name="Menck C.F.M."/>
            <person name="Miyaki C.Y."/>
            <person name="Moon D.H."/>
            <person name="Moreira L.M."/>
            <person name="Novo M.T.M."/>
            <person name="Okura V.K."/>
            <person name="Oliveira M.C."/>
            <person name="Oliveira V.R."/>
            <person name="Pereira H.A."/>
            <person name="Rossi A."/>
            <person name="Sena J.A.D."/>
            <person name="Silva C."/>
            <person name="de Souza R.F."/>
            <person name="Spinola L.A.F."/>
            <person name="Takita M.A."/>
            <person name="Tamura R.E."/>
            <person name="Teixeira E.C."/>
            <person name="Tezza R.I.D."/>
            <person name="Trindade dos Santos M."/>
            <person name="Truffi D."/>
            <person name="Tsai S.M."/>
            <person name="White F.F."/>
            <person name="Setubal J.C."/>
            <person name="Kitajima J.P."/>
        </authorList>
    </citation>
    <scope>NUCLEOTIDE SEQUENCE [LARGE SCALE GENOMIC DNA]</scope>
    <source>
        <strain>ATCC 33913 / DSM 3586 / NCPPB 528 / LMG 568 / P 25</strain>
    </source>
</reference>
<sequence>MAKLYFYYSAMNAGKTTTLLQSAHNYRERGMRTSILTPKLDHRAGSGVVASRIGLRADGQTFDRQTELLQLIERDIAAHGPLHCVLVDEAQFLSSAQVWQLSEVVDRLRIPVLCYGLRTDFRGELFEGSQFLLAWADELEEIKTICHSGSKATMTVRVDAQGHAVQDGPQVEIGGNERYVSVSRAEFKKIMRGEGRIDPLQIALPLPPA</sequence>
<dbReference type="EC" id="2.7.1.21" evidence="1"/>
<dbReference type="EMBL" id="AE008922">
    <property type="protein sequence ID" value="AAM43364.1"/>
    <property type="molecule type" value="Genomic_DNA"/>
</dbReference>
<dbReference type="RefSeq" id="NP_639482.1">
    <property type="nucleotide sequence ID" value="NC_003902.1"/>
</dbReference>
<dbReference type="RefSeq" id="WP_011039212.1">
    <property type="nucleotide sequence ID" value="NC_003902.1"/>
</dbReference>
<dbReference type="SMR" id="Q8P3C8"/>
<dbReference type="STRING" id="190485.XCC4143"/>
<dbReference type="EnsemblBacteria" id="AAM43364">
    <property type="protein sequence ID" value="AAM43364"/>
    <property type="gene ID" value="XCC4143"/>
</dbReference>
<dbReference type="KEGG" id="xcc:XCC4143"/>
<dbReference type="PATRIC" id="fig|190485.4.peg.4440"/>
<dbReference type="eggNOG" id="COG1435">
    <property type="taxonomic scope" value="Bacteria"/>
</dbReference>
<dbReference type="HOGENOM" id="CLU_064400_2_1_6"/>
<dbReference type="OrthoDB" id="9781579at2"/>
<dbReference type="Proteomes" id="UP000001010">
    <property type="component" value="Chromosome"/>
</dbReference>
<dbReference type="GO" id="GO:0005829">
    <property type="term" value="C:cytosol"/>
    <property type="evidence" value="ECO:0000318"/>
    <property type="project" value="GO_Central"/>
</dbReference>
<dbReference type="GO" id="GO:0005524">
    <property type="term" value="F:ATP binding"/>
    <property type="evidence" value="ECO:0007669"/>
    <property type="project" value="UniProtKB-UniRule"/>
</dbReference>
<dbReference type="GO" id="GO:0004797">
    <property type="term" value="F:thymidine kinase activity"/>
    <property type="evidence" value="ECO:0000318"/>
    <property type="project" value="GO_Central"/>
</dbReference>
<dbReference type="GO" id="GO:0071897">
    <property type="term" value="P:DNA biosynthetic process"/>
    <property type="evidence" value="ECO:0007669"/>
    <property type="project" value="UniProtKB-KW"/>
</dbReference>
<dbReference type="GO" id="GO:0046104">
    <property type="term" value="P:thymidine metabolic process"/>
    <property type="evidence" value="ECO:0000318"/>
    <property type="project" value="GO_Central"/>
</dbReference>
<dbReference type="FunFam" id="3.40.50.300:FF:000323">
    <property type="entry name" value="Thymidine kinase"/>
    <property type="match status" value="1"/>
</dbReference>
<dbReference type="Gene3D" id="3.40.50.300">
    <property type="entry name" value="P-loop containing nucleotide triphosphate hydrolases"/>
    <property type="match status" value="1"/>
</dbReference>
<dbReference type="HAMAP" id="MF_00124">
    <property type="entry name" value="Thymidine_kinase"/>
    <property type="match status" value="1"/>
</dbReference>
<dbReference type="InterPro" id="IPR027417">
    <property type="entry name" value="P-loop_NTPase"/>
</dbReference>
<dbReference type="InterPro" id="IPR001267">
    <property type="entry name" value="Thymidine_kinase"/>
</dbReference>
<dbReference type="NCBIfam" id="NF003300">
    <property type="entry name" value="PRK04296.1-5"/>
    <property type="match status" value="1"/>
</dbReference>
<dbReference type="PANTHER" id="PTHR11441">
    <property type="entry name" value="THYMIDINE KINASE"/>
    <property type="match status" value="1"/>
</dbReference>
<dbReference type="PANTHER" id="PTHR11441:SF0">
    <property type="entry name" value="THYMIDINE KINASE, CYTOSOLIC"/>
    <property type="match status" value="1"/>
</dbReference>
<dbReference type="Pfam" id="PF00265">
    <property type="entry name" value="TK"/>
    <property type="match status" value="1"/>
</dbReference>
<dbReference type="PIRSF" id="PIRSF035805">
    <property type="entry name" value="TK_cell"/>
    <property type="match status" value="1"/>
</dbReference>
<dbReference type="SUPFAM" id="SSF57716">
    <property type="entry name" value="Glucocorticoid receptor-like (DNA-binding domain)"/>
    <property type="match status" value="1"/>
</dbReference>
<dbReference type="SUPFAM" id="SSF52540">
    <property type="entry name" value="P-loop containing nucleoside triphosphate hydrolases"/>
    <property type="match status" value="1"/>
</dbReference>
<keyword id="KW-0067">ATP-binding</keyword>
<keyword id="KW-0963">Cytoplasm</keyword>
<keyword id="KW-0237">DNA synthesis</keyword>
<keyword id="KW-0418">Kinase</keyword>
<keyword id="KW-0547">Nucleotide-binding</keyword>
<keyword id="KW-1185">Reference proteome</keyword>
<keyword id="KW-0808">Transferase</keyword>
<gene>
    <name evidence="1" type="primary">tdk</name>
    <name type="ordered locus">XCC4143</name>
</gene>
<feature type="chain" id="PRO_0000175049" description="Thymidine kinase">
    <location>
        <begin position="1"/>
        <end position="209"/>
    </location>
</feature>
<feature type="active site" description="Proton acceptor" evidence="1">
    <location>
        <position position="89"/>
    </location>
</feature>
<feature type="binding site" evidence="1">
    <location>
        <begin position="9"/>
        <end position="16"/>
    </location>
    <ligand>
        <name>ATP</name>
        <dbReference type="ChEBI" id="CHEBI:30616"/>
    </ligand>
</feature>
<feature type="binding site" evidence="1">
    <location>
        <begin position="88"/>
        <end position="91"/>
    </location>
    <ligand>
        <name>ATP</name>
        <dbReference type="ChEBI" id="CHEBI:30616"/>
    </ligand>
</feature>
<comment type="catalytic activity">
    <reaction evidence="1">
        <text>thymidine + ATP = dTMP + ADP + H(+)</text>
        <dbReference type="Rhea" id="RHEA:19129"/>
        <dbReference type="ChEBI" id="CHEBI:15378"/>
        <dbReference type="ChEBI" id="CHEBI:17748"/>
        <dbReference type="ChEBI" id="CHEBI:30616"/>
        <dbReference type="ChEBI" id="CHEBI:63528"/>
        <dbReference type="ChEBI" id="CHEBI:456216"/>
        <dbReference type="EC" id="2.7.1.21"/>
    </reaction>
</comment>
<comment type="subunit">
    <text evidence="1">Homotetramer.</text>
</comment>
<comment type="subcellular location">
    <subcellularLocation>
        <location evidence="1">Cytoplasm</location>
    </subcellularLocation>
</comment>
<comment type="similarity">
    <text evidence="1">Belongs to the thymidine kinase family.</text>
</comment>
<organism>
    <name type="scientific">Xanthomonas campestris pv. campestris (strain ATCC 33913 / DSM 3586 / NCPPB 528 / LMG 568 / P 25)</name>
    <dbReference type="NCBI Taxonomy" id="190485"/>
    <lineage>
        <taxon>Bacteria</taxon>
        <taxon>Pseudomonadati</taxon>
        <taxon>Pseudomonadota</taxon>
        <taxon>Gammaproteobacteria</taxon>
        <taxon>Lysobacterales</taxon>
        <taxon>Lysobacteraceae</taxon>
        <taxon>Xanthomonas</taxon>
    </lineage>
</organism>
<evidence type="ECO:0000255" key="1">
    <source>
        <dbReference type="HAMAP-Rule" id="MF_00124"/>
    </source>
</evidence>
<protein>
    <recommendedName>
        <fullName evidence="1">Thymidine kinase</fullName>
        <ecNumber evidence="1">2.7.1.21</ecNumber>
    </recommendedName>
</protein>
<name>KITH_XANCP</name>
<proteinExistence type="inferred from homology"/>